<sequence length="589" mass="65830">MGVVEDTEPPLKRAKRLADEPNGFSANSSVRGSSVNSNSLGDLMARPLPSQGDDETIGSKGVIRKSEFVRIITRALYSLGYDKTGAMLEEESGISLHNSTIKLFLQQVKDGKWDQSVKTLHRIGFPDEKAVKAASFLLLEQKFLEFLKVEKIADALRTLRNEMAPLRINTKRVHELASSLISPSSFISHTTSTPGKESVNSRSKVLEELQTLLPASVIIPEKRLECLVENSLHIQRDSCVFHNTLDSDLSLYSDHQCGKHQIPSQTAQILESHTDEVWFLQFSHNGKYLASSSKDQTAIIWEISADGHISLKHTLVGHHKPVIAILWSPDDRQVLTCGAEEVIRRWDVDSGDCVHMYEKGGISPISCGWYPDGQGIIAGMTDRSICMWDLDGREKECWKGQRTQKVSDIAMTDDGKWLVSVCKDSVISLFDREATVERLIEEEDMITSFSLSNDNKYILVNLLNQEIRLWNIEGDPKIVSRYKGHKRSRFIIRSCFGGYKQAFIASGSEDSQVYIWHRSTGKLIVELPGHAGAVNCVSWSPTNLHMLASASDDGTIRIWGLDRINQQNQKKKLVQGSSSNGVIHRCNGN</sequence>
<feature type="chain" id="PRO_0000442058" description="WD repeat-containing protein 26 homolog">
    <location>
        <begin position="1"/>
        <end position="589"/>
    </location>
</feature>
<feature type="domain" description="LisH" evidence="3">
    <location>
        <begin position="64"/>
        <end position="96"/>
    </location>
</feature>
<feature type="domain" description="CTLH" evidence="2">
    <location>
        <begin position="97"/>
        <end position="154"/>
    </location>
</feature>
<feature type="repeat" description="WD 1" evidence="1">
    <location>
        <begin position="272"/>
        <end position="311"/>
    </location>
</feature>
<feature type="repeat" description="WD 2" evidence="1">
    <location>
        <begin position="317"/>
        <end position="358"/>
    </location>
</feature>
<feature type="repeat" description="WD 3" evidence="1">
    <location>
        <begin position="360"/>
        <end position="398"/>
    </location>
</feature>
<feature type="repeat" description="WD 4" evidence="1">
    <location>
        <begin position="401"/>
        <end position="440"/>
    </location>
</feature>
<feature type="repeat" description="WD 5" evidence="1">
    <location>
        <begin position="442"/>
        <end position="480"/>
    </location>
</feature>
<feature type="repeat" description="WD 6" evidence="1">
    <location>
        <begin position="484"/>
        <end position="526"/>
    </location>
</feature>
<feature type="repeat" description="WD 7" evidence="1">
    <location>
        <begin position="529"/>
        <end position="569"/>
    </location>
</feature>
<feature type="region of interest" description="Disordered" evidence="4">
    <location>
        <begin position="1"/>
        <end position="57"/>
    </location>
</feature>
<feature type="compositionally biased region" description="Low complexity" evidence="4">
    <location>
        <begin position="25"/>
        <end position="39"/>
    </location>
</feature>
<organism>
    <name type="scientific">Arabidopsis thaliana</name>
    <name type="common">Mouse-ear cress</name>
    <dbReference type="NCBI Taxonomy" id="3702"/>
    <lineage>
        <taxon>Eukaryota</taxon>
        <taxon>Viridiplantae</taxon>
        <taxon>Streptophyta</taxon>
        <taxon>Embryophyta</taxon>
        <taxon>Tracheophyta</taxon>
        <taxon>Spermatophyta</taxon>
        <taxon>Magnoliopsida</taxon>
        <taxon>eudicotyledons</taxon>
        <taxon>Gunneridae</taxon>
        <taxon>Pentapetalae</taxon>
        <taxon>rosids</taxon>
        <taxon>malvids</taxon>
        <taxon>Brassicales</taxon>
        <taxon>Brassicaceae</taxon>
        <taxon>Camelineae</taxon>
        <taxon>Arabidopsis</taxon>
    </lineage>
</organism>
<dbReference type="EMBL" id="AB006697">
    <property type="protein sequence ID" value="BAB10005.1"/>
    <property type="molecule type" value="Genomic_DNA"/>
</dbReference>
<dbReference type="EMBL" id="CP002688">
    <property type="protein sequence ID" value="AED91320.1"/>
    <property type="molecule type" value="Genomic_DNA"/>
</dbReference>
<dbReference type="EMBL" id="CP002688">
    <property type="protein sequence ID" value="AED91321.1"/>
    <property type="molecule type" value="Genomic_DNA"/>
</dbReference>
<dbReference type="EMBL" id="CP002688">
    <property type="protein sequence ID" value="ANM70934.1"/>
    <property type="molecule type" value="Genomic_DNA"/>
</dbReference>
<dbReference type="EMBL" id="AY054535">
    <property type="protein sequence ID" value="AAK96726.1"/>
    <property type="molecule type" value="mRNA"/>
</dbReference>
<dbReference type="EMBL" id="AY064639">
    <property type="protein sequence ID" value="AAL47352.1"/>
    <property type="molecule type" value="mRNA"/>
</dbReference>
<dbReference type="RefSeq" id="NP_001078546.1">
    <property type="nucleotide sequence ID" value="NM_001085077.1"/>
</dbReference>
<dbReference type="RefSeq" id="NP_001318513.1">
    <property type="nucleotide sequence ID" value="NM_001343018.1"/>
</dbReference>
<dbReference type="RefSeq" id="NP_196473.1">
    <property type="nucleotide sequence ID" value="NM_120942.3"/>
</dbReference>
<dbReference type="SMR" id="Q9FNN2"/>
<dbReference type="FunCoup" id="Q9FNN2">
    <property type="interactions" value="3949"/>
</dbReference>
<dbReference type="IntAct" id="Q9FNN2">
    <property type="interactions" value="4"/>
</dbReference>
<dbReference type="STRING" id="3702.Q9FNN2"/>
<dbReference type="iPTMnet" id="Q9FNN2"/>
<dbReference type="PaxDb" id="3702-AT5G08560.1"/>
<dbReference type="ProteomicsDB" id="242334"/>
<dbReference type="EnsemblPlants" id="AT5G08560.1">
    <property type="protein sequence ID" value="AT5G08560.1"/>
    <property type="gene ID" value="AT5G08560"/>
</dbReference>
<dbReference type="EnsemblPlants" id="AT5G08560.2">
    <property type="protein sequence ID" value="AT5G08560.2"/>
    <property type="gene ID" value="AT5G08560"/>
</dbReference>
<dbReference type="EnsemblPlants" id="AT5G08560.3">
    <property type="protein sequence ID" value="AT5G08560.3"/>
    <property type="gene ID" value="AT5G08560"/>
</dbReference>
<dbReference type="GeneID" id="830756"/>
<dbReference type="Gramene" id="AT5G08560.1">
    <property type="protein sequence ID" value="AT5G08560.1"/>
    <property type="gene ID" value="AT5G08560"/>
</dbReference>
<dbReference type="Gramene" id="AT5G08560.2">
    <property type="protein sequence ID" value="AT5G08560.2"/>
    <property type="gene ID" value="AT5G08560"/>
</dbReference>
<dbReference type="Gramene" id="AT5G08560.3">
    <property type="protein sequence ID" value="AT5G08560.3"/>
    <property type="gene ID" value="AT5G08560"/>
</dbReference>
<dbReference type="KEGG" id="ath:AT5G08560"/>
<dbReference type="Araport" id="AT5G08560"/>
<dbReference type="TAIR" id="AT5G08560">
    <property type="gene designation" value="WDR26"/>
</dbReference>
<dbReference type="eggNOG" id="KOG0293">
    <property type="taxonomic scope" value="Eukaryota"/>
</dbReference>
<dbReference type="HOGENOM" id="CLU_000288_57_25_1"/>
<dbReference type="InParanoid" id="Q9FNN2"/>
<dbReference type="OMA" id="TCAMNAK"/>
<dbReference type="PhylomeDB" id="Q9FNN2"/>
<dbReference type="PRO" id="PR:Q9FNN2"/>
<dbReference type="Proteomes" id="UP000006548">
    <property type="component" value="Chromosome 5"/>
</dbReference>
<dbReference type="ExpressionAtlas" id="Q9FNN2">
    <property type="expression patterns" value="baseline and differential"/>
</dbReference>
<dbReference type="GO" id="GO:0005737">
    <property type="term" value="C:cytoplasm"/>
    <property type="evidence" value="ECO:0000314"/>
    <property type="project" value="UniProtKB"/>
</dbReference>
<dbReference type="GO" id="GO:0005634">
    <property type="term" value="C:nucleus"/>
    <property type="evidence" value="ECO:0000314"/>
    <property type="project" value="TAIR"/>
</dbReference>
<dbReference type="GO" id="GO:0010150">
    <property type="term" value="P:leaf senescence"/>
    <property type="evidence" value="ECO:0000314"/>
    <property type="project" value="TAIR"/>
</dbReference>
<dbReference type="GO" id="GO:0009737">
    <property type="term" value="P:response to abscisic acid"/>
    <property type="evidence" value="ECO:0000315"/>
    <property type="project" value="TAIR"/>
</dbReference>
<dbReference type="GO" id="GO:0009646">
    <property type="term" value="P:response to absence of light"/>
    <property type="evidence" value="ECO:0000314"/>
    <property type="project" value="TAIR"/>
</dbReference>
<dbReference type="GO" id="GO:0009733">
    <property type="term" value="P:response to auxin"/>
    <property type="evidence" value="ECO:0000315"/>
    <property type="project" value="TAIR"/>
</dbReference>
<dbReference type="GO" id="GO:0009723">
    <property type="term" value="P:response to ethylene"/>
    <property type="evidence" value="ECO:0000315"/>
    <property type="project" value="TAIR"/>
</dbReference>
<dbReference type="GO" id="GO:0009416">
    <property type="term" value="P:response to light stimulus"/>
    <property type="evidence" value="ECO:0000315"/>
    <property type="project" value="TAIR"/>
</dbReference>
<dbReference type="GO" id="GO:0006970">
    <property type="term" value="P:response to osmotic stress"/>
    <property type="evidence" value="ECO:0000315"/>
    <property type="project" value="TAIR"/>
</dbReference>
<dbReference type="CDD" id="cd00200">
    <property type="entry name" value="WD40"/>
    <property type="match status" value="1"/>
</dbReference>
<dbReference type="FunFam" id="2.130.10.10:FF:000087">
    <property type="entry name" value="WD repeat-containing protein 26 homolog"/>
    <property type="match status" value="1"/>
</dbReference>
<dbReference type="Gene3D" id="2.130.10.10">
    <property type="entry name" value="YVTN repeat-like/Quinoprotein amine dehydrogenase"/>
    <property type="match status" value="2"/>
</dbReference>
<dbReference type="InterPro" id="IPR006595">
    <property type="entry name" value="CTLH_C"/>
</dbReference>
<dbReference type="InterPro" id="IPR020472">
    <property type="entry name" value="G-protein_beta_WD-40_rep"/>
</dbReference>
<dbReference type="InterPro" id="IPR006594">
    <property type="entry name" value="LisH"/>
</dbReference>
<dbReference type="InterPro" id="IPR015943">
    <property type="entry name" value="WD40/YVTN_repeat-like_dom_sf"/>
</dbReference>
<dbReference type="InterPro" id="IPR019775">
    <property type="entry name" value="WD40_repeat_CS"/>
</dbReference>
<dbReference type="InterPro" id="IPR036322">
    <property type="entry name" value="WD40_repeat_dom_sf"/>
</dbReference>
<dbReference type="InterPro" id="IPR001680">
    <property type="entry name" value="WD40_rpt"/>
</dbReference>
<dbReference type="InterPro" id="IPR051350">
    <property type="entry name" value="WD_repeat-ST_regulator"/>
</dbReference>
<dbReference type="PANTHER" id="PTHR22838">
    <property type="entry name" value="WD REPEAT PROTEIN 26-RELATED"/>
    <property type="match status" value="1"/>
</dbReference>
<dbReference type="PANTHER" id="PTHR22838:SF6">
    <property type="entry name" value="WD REPEAT-CONTAINING PROTEIN 26 HOMOLOG"/>
    <property type="match status" value="1"/>
</dbReference>
<dbReference type="Pfam" id="PF23627">
    <property type="entry name" value="LisH_WDR26"/>
    <property type="match status" value="1"/>
</dbReference>
<dbReference type="Pfam" id="PF00400">
    <property type="entry name" value="WD40"/>
    <property type="match status" value="6"/>
</dbReference>
<dbReference type="PRINTS" id="PR00320">
    <property type="entry name" value="GPROTEINBRPT"/>
</dbReference>
<dbReference type="SMART" id="SM00668">
    <property type="entry name" value="CTLH"/>
    <property type="match status" value="1"/>
</dbReference>
<dbReference type="SMART" id="SM00667">
    <property type="entry name" value="LisH"/>
    <property type="match status" value="1"/>
</dbReference>
<dbReference type="SMART" id="SM00320">
    <property type="entry name" value="WD40"/>
    <property type="match status" value="7"/>
</dbReference>
<dbReference type="SUPFAM" id="SSF50978">
    <property type="entry name" value="WD40 repeat-like"/>
    <property type="match status" value="1"/>
</dbReference>
<dbReference type="PROSITE" id="PS50897">
    <property type="entry name" value="CTLH"/>
    <property type="match status" value="1"/>
</dbReference>
<dbReference type="PROSITE" id="PS50896">
    <property type="entry name" value="LISH"/>
    <property type="match status" value="1"/>
</dbReference>
<dbReference type="PROSITE" id="PS00678">
    <property type="entry name" value="WD_REPEATS_1"/>
    <property type="match status" value="2"/>
</dbReference>
<dbReference type="PROSITE" id="PS50082">
    <property type="entry name" value="WD_REPEATS_2"/>
    <property type="match status" value="3"/>
</dbReference>
<dbReference type="PROSITE" id="PS50294">
    <property type="entry name" value="WD_REPEATS_REGION"/>
    <property type="match status" value="1"/>
</dbReference>
<keyword id="KW-0963">Cytoplasm</keyword>
<keyword id="KW-1185">Reference proteome</keyword>
<keyword id="KW-0677">Repeat</keyword>
<keyword id="KW-0853">WD repeat</keyword>
<reference key="1">
    <citation type="journal article" date="1997" name="DNA Res.">
        <title>Structural analysis of Arabidopsis thaliana chromosome 5. II. Sequence features of the regions of 1,044,062 bp covered by thirteen physically assigned P1 clones.</title>
        <authorList>
            <person name="Kotani H."/>
            <person name="Nakamura Y."/>
            <person name="Sato S."/>
            <person name="Kaneko T."/>
            <person name="Asamizu E."/>
            <person name="Miyajima N."/>
            <person name="Tabata S."/>
        </authorList>
    </citation>
    <scope>NUCLEOTIDE SEQUENCE [LARGE SCALE GENOMIC DNA]</scope>
    <source>
        <strain>cv. Columbia</strain>
    </source>
</reference>
<reference key="2">
    <citation type="journal article" date="2017" name="Plant J.">
        <title>Araport11: a complete reannotation of the Arabidopsis thaliana reference genome.</title>
        <authorList>
            <person name="Cheng C.Y."/>
            <person name="Krishnakumar V."/>
            <person name="Chan A.P."/>
            <person name="Thibaud-Nissen F."/>
            <person name="Schobel S."/>
            <person name="Town C.D."/>
        </authorList>
    </citation>
    <scope>GENOME REANNOTATION</scope>
    <source>
        <strain>cv. Columbia</strain>
    </source>
</reference>
<reference key="3">
    <citation type="journal article" date="2003" name="Science">
        <title>Empirical analysis of transcriptional activity in the Arabidopsis genome.</title>
        <authorList>
            <person name="Yamada K."/>
            <person name="Lim J."/>
            <person name="Dale J.M."/>
            <person name="Chen H."/>
            <person name="Shinn P."/>
            <person name="Palm C.J."/>
            <person name="Southwick A.M."/>
            <person name="Wu H.C."/>
            <person name="Kim C.J."/>
            <person name="Nguyen M."/>
            <person name="Pham P.K."/>
            <person name="Cheuk R.F."/>
            <person name="Karlin-Newmann G."/>
            <person name="Liu S.X."/>
            <person name="Lam B."/>
            <person name="Sakano H."/>
            <person name="Wu T."/>
            <person name="Yu G."/>
            <person name="Miranda M."/>
            <person name="Quach H.L."/>
            <person name="Tripp M."/>
            <person name="Chang C.H."/>
            <person name="Lee J.M."/>
            <person name="Toriumi M.J."/>
            <person name="Chan M.M."/>
            <person name="Tang C.C."/>
            <person name="Onodera C.S."/>
            <person name="Deng J.M."/>
            <person name="Akiyama K."/>
            <person name="Ansari Y."/>
            <person name="Arakawa T."/>
            <person name="Banh J."/>
            <person name="Banno F."/>
            <person name="Bowser L."/>
            <person name="Brooks S.Y."/>
            <person name="Carninci P."/>
            <person name="Chao Q."/>
            <person name="Choy N."/>
            <person name="Enju A."/>
            <person name="Goldsmith A.D."/>
            <person name="Gurjal M."/>
            <person name="Hansen N.F."/>
            <person name="Hayashizaki Y."/>
            <person name="Johnson-Hopson C."/>
            <person name="Hsuan V.W."/>
            <person name="Iida K."/>
            <person name="Karnes M."/>
            <person name="Khan S."/>
            <person name="Koesema E."/>
            <person name="Ishida J."/>
            <person name="Jiang P.X."/>
            <person name="Jones T."/>
            <person name="Kawai J."/>
            <person name="Kamiya A."/>
            <person name="Meyers C."/>
            <person name="Nakajima M."/>
            <person name="Narusaka M."/>
            <person name="Seki M."/>
            <person name="Sakurai T."/>
            <person name="Satou M."/>
            <person name="Tamse R."/>
            <person name="Vaysberg M."/>
            <person name="Wallender E.K."/>
            <person name="Wong C."/>
            <person name="Yamamura Y."/>
            <person name="Yuan S."/>
            <person name="Shinozaki K."/>
            <person name="Davis R.W."/>
            <person name="Theologis A."/>
            <person name="Ecker J.R."/>
        </authorList>
    </citation>
    <scope>NUCLEOTIDE SEQUENCE [LARGE SCALE MRNA]</scope>
    <source>
        <strain>cv. Columbia</strain>
    </source>
</reference>
<reference key="4">
    <citation type="journal article" date="2012" name="BMC Plant Biol.">
        <title>Interactions of an Arabidopsis RanBPM homologue with LisH-CTLH domain proteins revealed high conservation of CTLH complexes in eukaryotes.</title>
        <authorList>
            <person name="Tomastikova E."/>
            <person name="Cenklova V."/>
            <person name="Kohoutova L."/>
            <person name="Petrovska B."/>
            <person name="Vachova L."/>
            <person name="Halada P."/>
            <person name="Kocarova G."/>
            <person name="Binarova P."/>
        </authorList>
    </citation>
    <scope>IDENTIFICATION BY MASS SPECTROMETRY</scope>
    <scope>INTERACTION WITH RANBPM</scope>
    <scope>SUBCELLULAR LOCATION</scope>
</reference>
<reference key="5">
    <citation type="journal article" date="2015" name="Plant Sci.">
        <title>An Arabidopsis WDR protein coordinates cellular networks involved in light, stress response and hormone signals.</title>
        <authorList>
            <person name="Chuang H.W."/>
            <person name="Feng J.H."/>
            <person name="Feng Y.L."/>
            <person name="Wei M.J."/>
        </authorList>
    </citation>
    <scope>FUNCTION</scope>
    <scope>TISSUE SPECIFICITY</scope>
    <scope>INDUCTION</scope>
</reference>
<accession>Q9FNN2</accession>
<proteinExistence type="evidence at protein level"/>
<gene>
    <name evidence="7" type="primary">WDR26</name>
    <name evidence="9" type="ordered locus">At5g08560</name>
    <name evidence="10" type="ORF">MAH20.12</name>
</gene>
<name>WDR26_ARATH</name>
<evidence type="ECO:0000255" key="1"/>
<evidence type="ECO:0000255" key="2">
    <source>
        <dbReference type="PROSITE-ProRule" id="PRU00058"/>
    </source>
</evidence>
<evidence type="ECO:0000255" key="3">
    <source>
        <dbReference type="PROSITE-ProRule" id="PRU00126"/>
    </source>
</evidence>
<evidence type="ECO:0000256" key="4">
    <source>
        <dbReference type="SAM" id="MobiDB-lite"/>
    </source>
</evidence>
<evidence type="ECO:0000269" key="5">
    <source>
    </source>
</evidence>
<evidence type="ECO:0000269" key="6">
    <source>
    </source>
</evidence>
<evidence type="ECO:0000303" key="7">
    <source>
    </source>
</evidence>
<evidence type="ECO:0000305" key="8"/>
<evidence type="ECO:0000312" key="9">
    <source>
        <dbReference type="Araport" id="AT5G08560"/>
    </source>
</evidence>
<evidence type="ECO:0000312" key="10">
    <source>
        <dbReference type="EMBL" id="BAB10005.1"/>
    </source>
</evidence>
<protein>
    <recommendedName>
        <fullName evidence="8">WD repeat-containing protein 26 homolog</fullName>
        <shortName evidence="7">AtWDR26</shortName>
    </recommendedName>
</protein>
<comment type="function">
    <text evidence="6">Acts as a component involved in the crosstalk regulation between light, hormone and abiotic stress response.</text>
</comment>
<comment type="subunit">
    <text evidence="6">Interacts with RANBPM.</text>
</comment>
<comment type="subcellular location">
    <subcellularLocation>
        <location evidence="5">Cytoplasm</location>
    </subcellularLocation>
    <text evidence="5">Associates predominantly in the form of large cytoplasmic complexes.</text>
</comment>
<comment type="tissue specificity">
    <text evidence="6">Expressed in roots, leaves and flowers.</text>
</comment>
<comment type="induction">
    <text evidence="6">Induced by auxin, abscisic acid (ABA), ethylene, mannitol and salt stress. Down-regulated by dark.</text>
</comment>